<feature type="chain" id="PRO_0000234956" description="Serine hydroxymethyltransferase 2">
    <location>
        <begin position="1"/>
        <end position="424"/>
    </location>
</feature>
<feature type="binding site" evidence="1">
    <location>
        <position position="125"/>
    </location>
    <ligand>
        <name>(6S)-5,6,7,8-tetrahydrofolate</name>
        <dbReference type="ChEBI" id="CHEBI:57453"/>
    </ligand>
</feature>
<feature type="binding site" evidence="1">
    <location>
        <begin position="129"/>
        <end position="131"/>
    </location>
    <ligand>
        <name>(6S)-5,6,7,8-tetrahydrofolate</name>
        <dbReference type="ChEBI" id="CHEBI:57453"/>
    </ligand>
</feature>
<feature type="binding site" evidence="1">
    <location>
        <position position="250"/>
    </location>
    <ligand>
        <name>(6S)-5,6,7,8-tetrahydrofolate</name>
        <dbReference type="ChEBI" id="CHEBI:57453"/>
    </ligand>
</feature>
<feature type="site" description="Plays an important role in substrate specificity" evidence="1">
    <location>
        <position position="233"/>
    </location>
</feature>
<feature type="modified residue" description="N6-(pyridoxal phosphate)lysine" evidence="1">
    <location>
        <position position="234"/>
    </location>
</feature>
<feature type="helix" evidence="3">
    <location>
        <begin position="6"/>
        <end position="9"/>
    </location>
</feature>
<feature type="helix" evidence="3">
    <location>
        <begin position="12"/>
        <end position="15"/>
    </location>
</feature>
<feature type="helix" evidence="3">
    <location>
        <begin position="17"/>
        <end position="32"/>
    </location>
</feature>
<feature type="strand" evidence="3">
    <location>
        <begin position="33"/>
        <end position="35"/>
    </location>
</feature>
<feature type="helix" evidence="3">
    <location>
        <begin position="45"/>
        <end position="51"/>
    </location>
</feature>
<feature type="helix" evidence="3">
    <location>
        <begin position="54"/>
        <end position="56"/>
    </location>
</feature>
<feature type="helix" evidence="3">
    <location>
        <begin position="77"/>
        <end position="90"/>
    </location>
</feature>
<feature type="strand" evidence="3">
    <location>
        <begin position="93"/>
        <end position="96"/>
    </location>
</feature>
<feature type="helix" evidence="3">
    <location>
        <begin position="102"/>
        <end position="113"/>
    </location>
</feature>
<feature type="strand" evidence="3">
    <location>
        <begin position="119"/>
        <end position="123"/>
    </location>
</feature>
<feature type="strand" evidence="3">
    <location>
        <begin position="145"/>
        <end position="149"/>
    </location>
</feature>
<feature type="turn" evidence="3">
    <location>
        <begin position="153"/>
        <end position="155"/>
    </location>
</feature>
<feature type="helix" evidence="3">
    <location>
        <begin position="160"/>
        <end position="170"/>
    </location>
</feature>
<feature type="strand" evidence="3">
    <location>
        <begin position="173"/>
        <end position="178"/>
    </location>
</feature>
<feature type="helix" evidence="3">
    <location>
        <begin position="188"/>
        <end position="197"/>
    </location>
</feature>
<feature type="strand" evidence="3">
    <location>
        <begin position="201"/>
        <end position="205"/>
    </location>
</feature>
<feature type="helix" evidence="3">
    <location>
        <begin position="207"/>
        <end position="209"/>
    </location>
</feature>
<feature type="helix" evidence="3">
    <location>
        <begin position="210"/>
        <end position="214"/>
    </location>
</feature>
<feature type="helix" evidence="3">
    <location>
        <begin position="221"/>
        <end position="223"/>
    </location>
</feature>
<feature type="strand" evidence="3">
    <location>
        <begin position="226"/>
        <end position="233"/>
    </location>
</feature>
<feature type="helix" evidence="3">
    <location>
        <begin position="234"/>
        <end position="236"/>
    </location>
</feature>
<feature type="strand" evidence="3">
    <location>
        <begin position="242"/>
        <end position="247"/>
    </location>
</feature>
<feature type="helix" evidence="3">
    <location>
        <begin position="249"/>
        <end position="259"/>
    </location>
</feature>
<feature type="helix" evidence="3">
    <location>
        <begin position="269"/>
        <end position="282"/>
    </location>
</feature>
<feature type="helix" evidence="3">
    <location>
        <begin position="285"/>
        <end position="307"/>
    </location>
</feature>
<feature type="helix" evidence="3">
    <location>
        <begin position="313"/>
        <end position="315"/>
    </location>
</feature>
<feature type="strand" evidence="3">
    <location>
        <begin position="318"/>
        <end position="325"/>
    </location>
</feature>
<feature type="helix" evidence="3">
    <location>
        <begin position="327"/>
        <end position="329"/>
    </location>
</feature>
<feature type="helix" evidence="3">
    <location>
        <begin position="333"/>
        <end position="342"/>
    </location>
</feature>
<feature type="turn" evidence="3">
    <location>
        <begin position="359"/>
        <end position="361"/>
    </location>
</feature>
<feature type="strand" evidence="3">
    <location>
        <begin position="363"/>
        <end position="369"/>
    </location>
</feature>
<feature type="helix" evidence="3">
    <location>
        <begin position="370"/>
        <end position="374"/>
    </location>
</feature>
<feature type="helix" evidence="3">
    <location>
        <begin position="379"/>
        <end position="398"/>
    </location>
</feature>
<feature type="helix" evidence="3">
    <location>
        <begin position="404"/>
        <end position="419"/>
    </location>
</feature>
<accession>Q3JGP5</accession>
<dbReference type="EC" id="2.1.2.1" evidence="1"/>
<dbReference type="EMBL" id="CP000125">
    <property type="protein sequence ID" value="ABA51299.1"/>
    <property type="molecule type" value="Genomic_DNA"/>
</dbReference>
<dbReference type="RefSeq" id="WP_004523136.1">
    <property type="nucleotide sequence ID" value="NC_007435.1"/>
</dbReference>
<dbReference type="PDB" id="3ECD">
    <property type="method" value="X-ray"/>
    <property type="resolution" value="1.60 A"/>
    <property type="chains" value="A/B/C/D=1-424"/>
</dbReference>
<dbReference type="PDBsum" id="3ECD"/>
<dbReference type="SMR" id="Q3JGP5"/>
<dbReference type="EnsemblBacteria" id="ABA51299">
    <property type="protein sequence ID" value="ABA51299"/>
    <property type="gene ID" value="BURPS1710b_A2106"/>
</dbReference>
<dbReference type="KEGG" id="bpm:BURPS1710b_A2106"/>
<dbReference type="HOGENOM" id="CLU_022477_2_1_4"/>
<dbReference type="UniPathway" id="UPA00193"/>
<dbReference type="UniPathway" id="UPA00288">
    <property type="reaction ID" value="UER01023"/>
</dbReference>
<dbReference type="EvolutionaryTrace" id="Q3JGP5"/>
<dbReference type="Proteomes" id="UP000002700">
    <property type="component" value="Chromosome II"/>
</dbReference>
<dbReference type="GO" id="GO:0005829">
    <property type="term" value="C:cytosol"/>
    <property type="evidence" value="ECO:0007669"/>
    <property type="project" value="TreeGrafter"/>
</dbReference>
<dbReference type="GO" id="GO:0004372">
    <property type="term" value="F:glycine hydroxymethyltransferase activity"/>
    <property type="evidence" value="ECO:0007669"/>
    <property type="project" value="UniProtKB-UniRule"/>
</dbReference>
<dbReference type="GO" id="GO:0030170">
    <property type="term" value="F:pyridoxal phosphate binding"/>
    <property type="evidence" value="ECO:0007669"/>
    <property type="project" value="UniProtKB-UniRule"/>
</dbReference>
<dbReference type="GO" id="GO:0019264">
    <property type="term" value="P:glycine biosynthetic process from serine"/>
    <property type="evidence" value="ECO:0007669"/>
    <property type="project" value="UniProtKB-UniRule"/>
</dbReference>
<dbReference type="GO" id="GO:0035999">
    <property type="term" value="P:tetrahydrofolate interconversion"/>
    <property type="evidence" value="ECO:0007669"/>
    <property type="project" value="UniProtKB-UniRule"/>
</dbReference>
<dbReference type="CDD" id="cd00378">
    <property type="entry name" value="SHMT"/>
    <property type="match status" value="1"/>
</dbReference>
<dbReference type="FunFam" id="3.40.640.10:FF:000001">
    <property type="entry name" value="Serine hydroxymethyltransferase"/>
    <property type="match status" value="1"/>
</dbReference>
<dbReference type="Gene3D" id="3.90.1150.10">
    <property type="entry name" value="Aspartate Aminotransferase, domain 1"/>
    <property type="match status" value="1"/>
</dbReference>
<dbReference type="Gene3D" id="3.40.640.10">
    <property type="entry name" value="Type I PLP-dependent aspartate aminotransferase-like (Major domain)"/>
    <property type="match status" value="1"/>
</dbReference>
<dbReference type="HAMAP" id="MF_00051">
    <property type="entry name" value="SHMT"/>
    <property type="match status" value="1"/>
</dbReference>
<dbReference type="InterPro" id="IPR015424">
    <property type="entry name" value="PyrdxlP-dep_Trfase"/>
</dbReference>
<dbReference type="InterPro" id="IPR015421">
    <property type="entry name" value="PyrdxlP-dep_Trfase_major"/>
</dbReference>
<dbReference type="InterPro" id="IPR015422">
    <property type="entry name" value="PyrdxlP-dep_Trfase_small"/>
</dbReference>
<dbReference type="InterPro" id="IPR001085">
    <property type="entry name" value="Ser_HO-MeTrfase"/>
</dbReference>
<dbReference type="InterPro" id="IPR049943">
    <property type="entry name" value="Ser_HO-MeTrfase-like"/>
</dbReference>
<dbReference type="InterPro" id="IPR019798">
    <property type="entry name" value="Ser_HO-MeTrfase_PLP_BS"/>
</dbReference>
<dbReference type="InterPro" id="IPR039429">
    <property type="entry name" value="SHMT-like_dom"/>
</dbReference>
<dbReference type="NCBIfam" id="NF000586">
    <property type="entry name" value="PRK00011.1"/>
    <property type="match status" value="1"/>
</dbReference>
<dbReference type="PANTHER" id="PTHR11680">
    <property type="entry name" value="SERINE HYDROXYMETHYLTRANSFERASE"/>
    <property type="match status" value="1"/>
</dbReference>
<dbReference type="PANTHER" id="PTHR11680:SF35">
    <property type="entry name" value="SERINE HYDROXYMETHYLTRANSFERASE 1"/>
    <property type="match status" value="1"/>
</dbReference>
<dbReference type="Pfam" id="PF00464">
    <property type="entry name" value="SHMT"/>
    <property type="match status" value="1"/>
</dbReference>
<dbReference type="PIRSF" id="PIRSF000412">
    <property type="entry name" value="SHMT"/>
    <property type="match status" value="1"/>
</dbReference>
<dbReference type="SUPFAM" id="SSF53383">
    <property type="entry name" value="PLP-dependent transferases"/>
    <property type="match status" value="1"/>
</dbReference>
<dbReference type="PROSITE" id="PS00096">
    <property type="entry name" value="SHMT"/>
    <property type="match status" value="1"/>
</dbReference>
<proteinExistence type="evidence at protein level"/>
<protein>
    <recommendedName>
        <fullName evidence="1">Serine hydroxymethyltransferase 2</fullName>
        <shortName evidence="1">SHMT 2</shortName>
        <shortName evidence="1">Serine methylase 2</shortName>
        <ecNumber evidence="1">2.1.2.1</ecNumber>
    </recommendedName>
</protein>
<reference key="1">
    <citation type="journal article" date="2010" name="Genome Biol. Evol.">
        <title>Continuing evolution of Burkholderia mallei through genome reduction and large-scale rearrangements.</title>
        <authorList>
            <person name="Losada L."/>
            <person name="Ronning C.M."/>
            <person name="DeShazer D."/>
            <person name="Woods D."/>
            <person name="Fedorova N."/>
            <person name="Kim H.S."/>
            <person name="Shabalina S.A."/>
            <person name="Pearson T.R."/>
            <person name="Brinkac L."/>
            <person name="Tan P."/>
            <person name="Nandi T."/>
            <person name="Crabtree J."/>
            <person name="Badger J."/>
            <person name="Beckstrom-Sternberg S."/>
            <person name="Saqib M."/>
            <person name="Schutzer S.E."/>
            <person name="Keim P."/>
            <person name="Nierman W.C."/>
        </authorList>
    </citation>
    <scope>NUCLEOTIDE SEQUENCE [LARGE SCALE GENOMIC DNA]</scope>
    <source>
        <strain>1710b</strain>
    </source>
</reference>
<reference key="2">
    <citation type="submission" date="2008-08" db="PDB data bank">
        <title>Crystal structure of serine hydroxymethyltransferase from burkholderia pseudomallei.</title>
        <authorList>
            <consortium name="Seattle structural genomics center for infectious disease (SSGCID)"/>
        </authorList>
    </citation>
    <scope>X-RAY CRYSTALLOGRAPHY (1.60 ANGSTROMS)</scope>
    <scope>SUBUNIT</scope>
</reference>
<sequence>MSNANPFFSQSLAERDASVRGAILKELERQQSQVELIASENIVSRAVLDAQGSVLTNKYAEGYPGKRYYGGCEFADEVEALAIERVKRLFNAGHANVQPHSGAQANGAVMLALAKPGDTVLGMSLDAGGHLTHGAKPALSGKWFNALQYGVSRDTMLIDYDQVEALAQQHKPSLIIAGFSAYPRKLDFARFRAIADSVGAKLMVDMAHIAGVIAAGRHANPVEHAHVVTSTTHKTLRGPRGGFVLTNDEEIAKKINSAVFPGLQGGPLMHVIAGKAVAFGEALTDDFKTYIDRVLANAQALGDVLKAGGVDLVTGGTDNHLLLVDLRPKGLKGAQVEQALERAGITCNKNGIPFDPEKPTITSGIRLGTPAGTTRGFGAAEFREVGRLILEVFEALRTNPEGDHATEQRVRREIFALCERFPIY</sequence>
<gene>
    <name evidence="1" type="primary">glyA2</name>
    <name type="ordered locus">BURPS1710b_A2106</name>
</gene>
<keyword id="KW-0002">3D-structure</keyword>
<keyword id="KW-0028">Amino-acid biosynthesis</keyword>
<keyword id="KW-0963">Cytoplasm</keyword>
<keyword id="KW-0554">One-carbon metabolism</keyword>
<keyword id="KW-0663">Pyridoxal phosphate</keyword>
<keyword id="KW-0808">Transferase</keyword>
<name>GLYA2_BURP1</name>
<organism>
    <name type="scientific">Burkholderia pseudomallei (strain 1710b)</name>
    <dbReference type="NCBI Taxonomy" id="320372"/>
    <lineage>
        <taxon>Bacteria</taxon>
        <taxon>Pseudomonadati</taxon>
        <taxon>Pseudomonadota</taxon>
        <taxon>Betaproteobacteria</taxon>
        <taxon>Burkholderiales</taxon>
        <taxon>Burkholderiaceae</taxon>
        <taxon>Burkholderia</taxon>
        <taxon>pseudomallei group</taxon>
    </lineage>
</organism>
<evidence type="ECO:0000255" key="1">
    <source>
        <dbReference type="HAMAP-Rule" id="MF_00051"/>
    </source>
</evidence>
<evidence type="ECO:0000269" key="2">
    <source ref="2"/>
</evidence>
<evidence type="ECO:0007829" key="3">
    <source>
        <dbReference type="PDB" id="3ECD"/>
    </source>
</evidence>
<comment type="function">
    <text evidence="1">Catalyzes the reversible interconversion of serine and glycine with tetrahydrofolate (THF) serving as the one-carbon carrier. This reaction serves as the major source of one-carbon groups required for the biosynthesis of purines, thymidylate, methionine, and other important biomolecules. Also exhibits THF-independent aldolase activity toward beta-hydroxyamino acids, producing glycine and aldehydes, via a retro-aldol mechanism.</text>
</comment>
<comment type="catalytic activity">
    <reaction evidence="1">
        <text>(6R)-5,10-methylene-5,6,7,8-tetrahydrofolate + glycine + H2O = (6S)-5,6,7,8-tetrahydrofolate + L-serine</text>
        <dbReference type="Rhea" id="RHEA:15481"/>
        <dbReference type="ChEBI" id="CHEBI:15377"/>
        <dbReference type="ChEBI" id="CHEBI:15636"/>
        <dbReference type="ChEBI" id="CHEBI:33384"/>
        <dbReference type="ChEBI" id="CHEBI:57305"/>
        <dbReference type="ChEBI" id="CHEBI:57453"/>
        <dbReference type="EC" id="2.1.2.1"/>
    </reaction>
</comment>
<comment type="cofactor">
    <cofactor evidence="1">
        <name>pyridoxal 5'-phosphate</name>
        <dbReference type="ChEBI" id="CHEBI:597326"/>
    </cofactor>
</comment>
<comment type="pathway">
    <text evidence="1">One-carbon metabolism; tetrahydrofolate interconversion.</text>
</comment>
<comment type="pathway">
    <text evidence="1">Amino-acid biosynthesis; glycine biosynthesis; glycine from L-serine: step 1/1.</text>
</comment>
<comment type="subunit">
    <text evidence="1 2">Homodimer.</text>
</comment>
<comment type="subcellular location">
    <subcellularLocation>
        <location evidence="1">Cytoplasm</location>
    </subcellularLocation>
</comment>
<comment type="similarity">
    <text evidence="1">Belongs to the SHMT family.</text>
</comment>